<dbReference type="EMBL" id="AL138648">
    <property type="protein sequence ID" value="CAB86423.1"/>
    <property type="molecule type" value="Genomic_DNA"/>
</dbReference>
<dbReference type="EMBL" id="CP002686">
    <property type="protein sequence ID" value="AEE80449.1"/>
    <property type="molecule type" value="Genomic_DNA"/>
</dbReference>
<dbReference type="EMBL" id="CP002686">
    <property type="protein sequence ID" value="AEE80450.1"/>
    <property type="molecule type" value="Genomic_DNA"/>
</dbReference>
<dbReference type="EMBL" id="CP002686">
    <property type="protein sequence ID" value="ANM64823.1"/>
    <property type="molecule type" value="Genomic_DNA"/>
</dbReference>
<dbReference type="EMBL" id="AK229127">
    <property type="protein sequence ID" value="BAF01002.1"/>
    <property type="molecule type" value="mRNA"/>
</dbReference>
<dbReference type="EMBL" id="AY087726">
    <property type="protein sequence ID" value="AAM65263.1"/>
    <property type="molecule type" value="mRNA"/>
</dbReference>
<dbReference type="PIR" id="T48111">
    <property type="entry name" value="T48111"/>
</dbReference>
<dbReference type="RefSeq" id="NP_001326828.1">
    <molecule id="Q9M1W7-1"/>
    <property type="nucleotide sequence ID" value="NM_001340193.1"/>
</dbReference>
<dbReference type="RefSeq" id="NP_191881.1">
    <molecule id="Q9M1W7-2"/>
    <property type="nucleotide sequence ID" value="NM_116187.4"/>
</dbReference>
<dbReference type="RefSeq" id="NP_974481.1">
    <molecule id="Q9M1W7-1"/>
    <property type="nucleotide sequence ID" value="NM_202752.2"/>
</dbReference>
<dbReference type="SMR" id="Q9M1W7"/>
<dbReference type="BioGRID" id="10811">
    <property type="interactions" value="1"/>
</dbReference>
<dbReference type="FunCoup" id="Q9M1W7">
    <property type="interactions" value="47"/>
</dbReference>
<dbReference type="IntAct" id="Q9M1W7">
    <property type="interactions" value="2"/>
</dbReference>
<dbReference type="STRING" id="3702.Q9M1W7"/>
<dbReference type="PaxDb" id="3702-AT3G63220.2"/>
<dbReference type="ProteomicsDB" id="232657">
    <molecule id="Q9M1W7-1"/>
</dbReference>
<dbReference type="EnsemblPlants" id="AT3G63220.1">
    <molecule id="Q9M1W7-2"/>
    <property type="protein sequence ID" value="AT3G63220.1"/>
    <property type="gene ID" value="AT3G63220"/>
</dbReference>
<dbReference type="EnsemblPlants" id="AT3G63220.2">
    <molecule id="Q9M1W7-1"/>
    <property type="protein sequence ID" value="AT3G63220.2"/>
    <property type="gene ID" value="AT3G63220"/>
</dbReference>
<dbReference type="EnsemblPlants" id="AT3G63220.3">
    <molecule id="Q9M1W7-1"/>
    <property type="protein sequence ID" value="AT3G63220.3"/>
    <property type="gene ID" value="AT3G63220"/>
</dbReference>
<dbReference type="GeneID" id="825497"/>
<dbReference type="Gramene" id="AT3G63220.1">
    <molecule id="Q9M1W7-2"/>
    <property type="protein sequence ID" value="AT3G63220.1"/>
    <property type="gene ID" value="AT3G63220"/>
</dbReference>
<dbReference type="Gramene" id="AT3G63220.2">
    <molecule id="Q9M1W7-1"/>
    <property type="protein sequence ID" value="AT3G63220.2"/>
    <property type="gene ID" value="AT3G63220"/>
</dbReference>
<dbReference type="Gramene" id="AT3G63220.3">
    <molecule id="Q9M1W7-1"/>
    <property type="protein sequence ID" value="AT3G63220.3"/>
    <property type="gene ID" value="AT3G63220"/>
</dbReference>
<dbReference type="KEGG" id="ath:AT3G63220"/>
<dbReference type="Araport" id="AT3G63220"/>
<dbReference type="TAIR" id="AT3G63220"/>
<dbReference type="eggNOG" id="KOG1072">
    <property type="taxonomic scope" value="Eukaryota"/>
</dbReference>
<dbReference type="InParanoid" id="Q9M1W7"/>
<dbReference type="OMA" id="EKNVWDP"/>
<dbReference type="OrthoDB" id="45365at2759"/>
<dbReference type="PhylomeDB" id="Q9M1W7"/>
<dbReference type="UniPathway" id="UPA00143"/>
<dbReference type="PRO" id="PR:Q9M1W7"/>
<dbReference type="Proteomes" id="UP000006548">
    <property type="component" value="Chromosome 3"/>
</dbReference>
<dbReference type="ExpressionAtlas" id="Q9M1W7">
    <property type="expression patterns" value="baseline and differential"/>
</dbReference>
<dbReference type="GO" id="GO:0016567">
    <property type="term" value="P:protein ubiquitination"/>
    <property type="evidence" value="ECO:0007669"/>
    <property type="project" value="UniProtKB-UniPathway"/>
</dbReference>
<dbReference type="CDD" id="cd22152">
    <property type="entry name" value="F-box_AtAFR-like"/>
    <property type="match status" value="1"/>
</dbReference>
<dbReference type="Gene3D" id="2.120.10.80">
    <property type="entry name" value="Kelch-type beta propeller"/>
    <property type="match status" value="1"/>
</dbReference>
<dbReference type="InterPro" id="IPR001810">
    <property type="entry name" value="F-box_dom"/>
</dbReference>
<dbReference type="InterPro" id="IPR015915">
    <property type="entry name" value="Kelch-typ_b-propeller"/>
</dbReference>
<dbReference type="InterPro" id="IPR006652">
    <property type="entry name" value="Kelch_1"/>
</dbReference>
<dbReference type="PANTHER" id="PTHR46344:SF21">
    <property type="entry name" value="F-BOX_KELCH-REPEAT PROTEIN SKIP30 ISOFORM X2"/>
    <property type="match status" value="1"/>
</dbReference>
<dbReference type="PANTHER" id="PTHR46344">
    <property type="entry name" value="OS02G0202900 PROTEIN"/>
    <property type="match status" value="1"/>
</dbReference>
<dbReference type="Pfam" id="PF00646">
    <property type="entry name" value="F-box"/>
    <property type="match status" value="1"/>
</dbReference>
<dbReference type="Pfam" id="PF01344">
    <property type="entry name" value="Kelch_1"/>
    <property type="match status" value="2"/>
</dbReference>
<dbReference type="SMART" id="SM00256">
    <property type="entry name" value="FBOX"/>
    <property type="match status" value="1"/>
</dbReference>
<dbReference type="SMART" id="SM00612">
    <property type="entry name" value="Kelch"/>
    <property type="match status" value="2"/>
</dbReference>
<dbReference type="SUPFAM" id="SSF117281">
    <property type="entry name" value="Kelch motif"/>
    <property type="match status" value="1"/>
</dbReference>
<keyword id="KW-0025">Alternative splicing</keyword>
<keyword id="KW-0880">Kelch repeat</keyword>
<keyword id="KW-1185">Reference proteome</keyword>
<keyword id="KW-0677">Repeat</keyword>
<keyword id="KW-0833">Ubl conjugation pathway</keyword>
<accession>Q9M1W7</accession>
<accession>Q3EAF6</accession>
<feature type="chain" id="PRO_0000283238" description="F-box/kelch-repeat protein SKIP30">
    <location>
        <begin position="1"/>
        <end position="352"/>
    </location>
</feature>
<feature type="domain" description="F-box">
    <location>
        <begin position="9"/>
        <end position="55"/>
    </location>
</feature>
<feature type="repeat" description="Kelch 1">
    <location>
        <begin position="57"/>
        <end position="109"/>
    </location>
</feature>
<feature type="repeat" description="Kelch 2">
    <location>
        <begin position="110"/>
        <end position="167"/>
    </location>
</feature>
<feature type="repeat" description="Kelch 3">
    <location>
        <begin position="168"/>
        <end position="215"/>
    </location>
</feature>
<feature type="repeat" description="Kelch 4">
    <location>
        <begin position="243"/>
        <end position="293"/>
    </location>
</feature>
<feature type="repeat" description="Kelch 5">
    <location>
        <begin position="296"/>
        <end position="351"/>
    </location>
</feature>
<feature type="splice variant" id="VSP_024315" description="In isoform 2." evidence="3 4">
    <location>
        <begin position="1"/>
        <end position="7"/>
    </location>
</feature>
<protein>
    <recommendedName>
        <fullName>F-box/kelch-repeat protein SKIP30</fullName>
    </recommendedName>
    <alternativeName>
        <fullName>SKP1-interacting partner 30</fullName>
    </alternativeName>
</protein>
<organism>
    <name type="scientific">Arabidopsis thaliana</name>
    <name type="common">Mouse-ear cress</name>
    <dbReference type="NCBI Taxonomy" id="3702"/>
    <lineage>
        <taxon>Eukaryota</taxon>
        <taxon>Viridiplantae</taxon>
        <taxon>Streptophyta</taxon>
        <taxon>Embryophyta</taxon>
        <taxon>Tracheophyta</taxon>
        <taxon>Spermatophyta</taxon>
        <taxon>Magnoliopsida</taxon>
        <taxon>eudicotyledons</taxon>
        <taxon>Gunneridae</taxon>
        <taxon>Pentapetalae</taxon>
        <taxon>rosids</taxon>
        <taxon>malvids</taxon>
        <taxon>Brassicales</taxon>
        <taxon>Brassicaceae</taxon>
        <taxon>Camelineae</taxon>
        <taxon>Arabidopsis</taxon>
    </lineage>
</organism>
<evidence type="ECO:0000250" key="1"/>
<evidence type="ECO:0000269" key="2">
    <source>
    </source>
</evidence>
<evidence type="ECO:0000303" key="3">
    <source ref="3"/>
</evidence>
<evidence type="ECO:0000303" key="4">
    <source ref="4"/>
</evidence>
<reference key="1">
    <citation type="journal article" date="2000" name="Nature">
        <title>Sequence and analysis of chromosome 3 of the plant Arabidopsis thaliana.</title>
        <authorList>
            <person name="Salanoubat M."/>
            <person name="Lemcke K."/>
            <person name="Rieger M."/>
            <person name="Ansorge W."/>
            <person name="Unseld M."/>
            <person name="Fartmann B."/>
            <person name="Valle G."/>
            <person name="Bloecker H."/>
            <person name="Perez-Alonso M."/>
            <person name="Obermaier B."/>
            <person name="Delseny M."/>
            <person name="Boutry M."/>
            <person name="Grivell L.A."/>
            <person name="Mache R."/>
            <person name="Puigdomenech P."/>
            <person name="De Simone V."/>
            <person name="Choisne N."/>
            <person name="Artiguenave F."/>
            <person name="Robert C."/>
            <person name="Brottier P."/>
            <person name="Wincker P."/>
            <person name="Cattolico L."/>
            <person name="Weissenbach J."/>
            <person name="Saurin W."/>
            <person name="Quetier F."/>
            <person name="Schaefer M."/>
            <person name="Mueller-Auer S."/>
            <person name="Gabel C."/>
            <person name="Fuchs M."/>
            <person name="Benes V."/>
            <person name="Wurmbach E."/>
            <person name="Drzonek H."/>
            <person name="Erfle H."/>
            <person name="Jordan N."/>
            <person name="Bangert S."/>
            <person name="Wiedelmann R."/>
            <person name="Kranz H."/>
            <person name="Voss H."/>
            <person name="Holland R."/>
            <person name="Brandt P."/>
            <person name="Nyakatura G."/>
            <person name="Vezzi A."/>
            <person name="D'Angelo M."/>
            <person name="Pallavicini A."/>
            <person name="Toppo S."/>
            <person name="Simionati B."/>
            <person name="Conrad A."/>
            <person name="Hornischer K."/>
            <person name="Kauer G."/>
            <person name="Loehnert T.-H."/>
            <person name="Nordsiek G."/>
            <person name="Reichelt J."/>
            <person name="Scharfe M."/>
            <person name="Schoen O."/>
            <person name="Bargues M."/>
            <person name="Terol J."/>
            <person name="Climent J."/>
            <person name="Navarro P."/>
            <person name="Collado C."/>
            <person name="Perez-Perez A."/>
            <person name="Ottenwaelder B."/>
            <person name="Duchemin D."/>
            <person name="Cooke R."/>
            <person name="Laudie M."/>
            <person name="Berger-Llauro C."/>
            <person name="Purnelle B."/>
            <person name="Masuy D."/>
            <person name="de Haan M."/>
            <person name="Maarse A.C."/>
            <person name="Alcaraz J.-P."/>
            <person name="Cottet A."/>
            <person name="Casacuberta E."/>
            <person name="Monfort A."/>
            <person name="Argiriou A."/>
            <person name="Flores M."/>
            <person name="Liguori R."/>
            <person name="Vitale D."/>
            <person name="Mannhaupt G."/>
            <person name="Haase D."/>
            <person name="Schoof H."/>
            <person name="Rudd S."/>
            <person name="Zaccaria P."/>
            <person name="Mewes H.-W."/>
            <person name="Mayer K.F.X."/>
            <person name="Kaul S."/>
            <person name="Town C.D."/>
            <person name="Koo H.L."/>
            <person name="Tallon L.J."/>
            <person name="Jenkins J."/>
            <person name="Rooney T."/>
            <person name="Rizzo M."/>
            <person name="Walts A."/>
            <person name="Utterback T."/>
            <person name="Fujii C.Y."/>
            <person name="Shea T.P."/>
            <person name="Creasy T.H."/>
            <person name="Haas B."/>
            <person name="Maiti R."/>
            <person name="Wu D."/>
            <person name="Peterson J."/>
            <person name="Van Aken S."/>
            <person name="Pai G."/>
            <person name="Militscher J."/>
            <person name="Sellers P."/>
            <person name="Gill J.E."/>
            <person name="Feldblyum T.V."/>
            <person name="Preuss D."/>
            <person name="Lin X."/>
            <person name="Nierman W.C."/>
            <person name="Salzberg S.L."/>
            <person name="White O."/>
            <person name="Venter J.C."/>
            <person name="Fraser C.M."/>
            <person name="Kaneko T."/>
            <person name="Nakamura Y."/>
            <person name="Sato S."/>
            <person name="Kato T."/>
            <person name="Asamizu E."/>
            <person name="Sasamoto S."/>
            <person name="Kimura T."/>
            <person name="Idesawa K."/>
            <person name="Kawashima K."/>
            <person name="Kishida Y."/>
            <person name="Kiyokawa C."/>
            <person name="Kohara M."/>
            <person name="Matsumoto M."/>
            <person name="Matsuno A."/>
            <person name="Muraki A."/>
            <person name="Nakayama S."/>
            <person name="Nakazaki N."/>
            <person name="Shinpo S."/>
            <person name="Takeuchi C."/>
            <person name="Wada T."/>
            <person name="Watanabe A."/>
            <person name="Yamada M."/>
            <person name="Yasuda M."/>
            <person name="Tabata S."/>
        </authorList>
    </citation>
    <scope>NUCLEOTIDE SEQUENCE [LARGE SCALE GENOMIC DNA]</scope>
    <source>
        <strain>cv. Columbia</strain>
    </source>
</reference>
<reference key="2">
    <citation type="journal article" date="2017" name="Plant J.">
        <title>Araport11: a complete reannotation of the Arabidopsis thaliana reference genome.</title>
        <authorList>
            <person name="Cheng C.Y."/>
            <person name="Krishnakumar V."/>
            <person name="Chan A.P."/>
            <person name="Thibaud-Nissen F."/>
            <person name="Schobel S."/>
            <person name="Town C.D."/>
        </authorList>
    </citation>
    <scope>GENOME REANNOTATION</scope>
    <source>
        <strain>cv. Columbia</strain>
    </source>
</reference>
<reference key="3">
    <citation type="submission" date="2006-07" db="EMBL/GenBank/DDBJ databases">
        <title>Large-scale analysis of RIKEN Arabidopsis full-length (RAFL) cDNAs.</title>
        <authorList>
            <person name="Totoki Y."/>
            <person name="Seki M."/>
            <person name="Ishida J."/>
            <person name="Nakajima M."/>
            <person name="Enju A."/>
            <person name="Kamiya A."/>
            <person name="Narusaka M."/>
            <person name="Shin-i T."/>
            <person name="Nakagawa M."/>
            <person name="Sakamoto N."/>
            <person name="Oishi K."/>
            <person name="Kohara Y."/>
            <person name="Kobayashi M."/>
            <person name="Toyoda A."/>
            <person name="Sakaki Y."/>
            <person name="Sakurai T."/>
            <person name="Iida K."/>
            <person name="Akiyama K."/>
            <person name="Satou M."/>
            <person name="Toyoda T."/>
            <person name="Konagaya A."/>
            <person name="Carninci P."/>
            <person name="Kawai J."/>
            <person name="Hayashizaki Y."/>
            <person name="Shinozaki K."/>
        </authorList>
    </citation>
    <scope>NUCLEOTIDE SEQUENCE [LARGE SCALE MRNA] (ISOFORM 2)</scope>
    <source>
        <strain>cv. Columbia</strain>
    </source>
</reference>
<reference key="4">
    <citation type="submission" date="2002-03" db="EMBL/GenBank/DDBJ databases">
        <title>Full-length cDNA from Arabidopsis thaliana.</title>
        <authorList>
            <person name="Brover V.V."/>
            <person name="Troukhan M.E."/>
            <person name="Alexandrov N.A."/>
            <person name="Lu Y.-P."/>
            <person name="Flavell R.B."/>
            <person name="Feldmann K.A."/>
        </authorList>
    </citation>
    <scope>NUCLEOTIDE SEQUENCE [LARGE SCALE MRNA] (ISOFORM 2)</scope>
</reference>
<reference key="5">
    <citation type="journal article" date="2003" name="Plant J.">
        <title>Protein interaction analysis of SCF ubiquitin E3 ligase subunits from Arabidopsis.</title>
        <authorList>
            <person name="Risseeuw E.P."/>
            <person name="Daskalchuk T.E."/>
            <person name="Banks T.W."/>
            <person name="Liu E."/>
            <person name="Cotelesage J."/>
            <person name="Hellmann H."/>
            <person name="Estelle M."/>
            <person name="Somers D.E."/>
            <person name="Crosby W.L."/>
        </authorList>
    </citation>
    <scope>INTERACTION WITH SKP1A/ASK1</scope>
</reference>
<comment type="function">
    <text evidence="1">Component of SCF(ASK-cullin-F-box) E3 ubiquitin ligase complexes, which may mediate the ubiquitination and subsequent proteasomal degradation of target proteins.</text>
</comment>
<comment type="pathway">
    <text>Protein modification; protein ubiquitination.</text>
</comment>
<comment type="subunit">
    <text evidence="1 2">Part of a SCF (ASK-cullin-F-box) protein ligase complex (By similarity). Interacts with SKP1A/ASK1.</text>
</comment>
<comment type="alternative products">
    <event type="alternative splicing"/>
    <isoform>
        <id>Q9M1W7-1</id>
        <name>1</name>
        <sequence type="displayed"/>
    </isoform>
    <isoform>
        <id>Q9M1W7-2</id>
        <name>2</name>
        <sequence type="described" ref="VSP_024315"/>
    </isoform>
</comment>
<comment type="domain">
    <text evidence="1">The F-box is necessary for the interaction with ASK proteins.</text>
</comment>
<gene>
    <name type="primary">SKIP30</name>
    <name type="ordered locus">At3g63220</name>
    <name type="ORF">F16M2.70</name>
</gene>
<name>SKI30_ARATH</name>
<sequence length="352" mass="38980">MCYRQETMSGLLDGIPEAVALRCLAHVPLHLHPNLELVSRSWRAAIRSHELFRVRKELRSSEHLLCVCAFDPENIWQVYSPNCDRWLTLPLLPSRIRHLAHFGAVTTAGMLFVLGGGSDAVSPVTGDHDGTFATDQVWSYDFVQRQWTPRASMLVPRAMFACCVLQGKIVVAGGFTTCRKSISGAEMYDPENDVWTSIPDLHQTHNSACSGLVVNGKVHVLHKGLSTVQVLESVKLGWDVKDYGWPQGPMVVVEDVLYVMSHGLVFKQEGDTWKMVASASEFKRRIGMAMTSLSDEVLIVGGVIGPDRLNWDIKPLSDVDALTVGNDRPAWRSVAPMTRCRGTILGCTQLTI</sequence>
<proteinExistence type="evidence at protein level"/>